<name>RBD2_DEBHA</name>
<dbReference type="EC" id="3.4.21.105" evidence="2"/>
<dbReference type="EMBL" id="CR382136">
    <property type="protein sequence ID" value="CAG87065.2"/>
    <property type="molecule type" value="Genomic_DNA"/>
</dbReference>
<dbReference type="RefSeq" id="XP_458911.2">
    <property type="nucleotide sequence ID" value="XM_458911.1"/>
</dbReference>
<dbReference type="FunCoup" id="Q6BSA9">
    <property type="interactions" value="78"/>
</dbReference>
<dbReference type="STRING" id="284592.Q6BSA9"/>
<dbReference type="GeneID" id="2901604"/>
<dbReference type="KEGG" id="dha:DEHA2D10252g"/>
<dbReference type="VEuPathDB" id="FungiDB:DEHA2D10252g"/>
<dbReference type="eggNOG" id="KOG2632">
    <property type="taxonomic scope" value="Eukaryota"/>
</dbReference>
<dbReference type="HOGENOM" id="CLU_071084_0_0_1"/>
<dbReference type="InParanoid" id="Q6BSA9"/>
<dbReference type="OMA" id="NTYPIVH"/>
<dbReference type="OrthoDB" id="10257275at2759"/>
<dbReference type="Proteomes" id="UP000000599">
    <property type="component" value="Chromosome D"/>
</dbReference>
<dbReference type="GO" id="GO:0000139">
    <property type="term" value="C:Golgi membrane"/>
    <property type="evidence" value="ECO:0007669"/>
    <property type="project" value="UniProtKB-SubCell"/>
</dbReference>
<dbReference type="GO" id="GO:0034399">
    <property type="term" value="C:nuclear periphery"/>
    <property type="evidence" value="ECO:0007669"/>
    <property type="project" value="EnsemblFungi"/>
</dbReference>
<dbReference type="GO" id="GO:0004252">
    <property type="term" value="F:serine-type endopeptidase activity"/>
    <property type="evidence" value="ECO:0007669"/>
    <property type="project" value="InterPro"/>
</dbReference>
<dbReference type="GO" id="GO:0006508">
    <property type="term" value="P:proteolysis"/>
    <property type="evidence" value="ECO:0007669"/>
    <property type="project" value="UniProtKB-KW"/>
</dbReference>
<dbReference type="Gene3D" id="1.20.1540.10">
    <property type="entry name" value="Rhomboid-like"/>
    <property type="match status" value="1"/>
</dbReference>
<dbReference type="InterPro" id="IPR022764">
    <property type="entry name" value="Peptidase_S54_rhomboid_dom"/>
</dbReference>
<dbReference type="InterPro" id="IPR035952">
    <property type="entry name" value="Rhomboid-like_sf"/>
</dbReference>
<dbReference type="PANTHER" id="PTHR43066:SF1">
    <property type="entry name" value="RHOMBOID PROTEIN 2"/>
    <property type="match status" value="1"/>
</dbReference>
<dbReference type="PANTHER" id="PTHR43066">
    <property type="entry name" value="RHOMBOID-RELATED PROTEIN"/>
    <property type="match status" value="1"/>
</dbReference>
<dbReference type="Pfam" id="PF01694">
    <property type="entry name" value="Rhomboid"/>
    <property type="match status" value="1"/>
</dbReference>
<dbReference type="SUPFAM" id="SSF144091">
    <property type="entry name" value="Rhomboid-like"/>
    <property type="match status" value="1"/>
</dbReference>
<evidence type="ECO:0000250" key="1"/>
<evidence type="ECO:0000250" key="2">
    <source>
        <dbReference type="UniProtKB" id="O74926"/>
    </source>
</evidence>
<evidence type="ECO:0000255" key="3"/>
<evidence type="ECO:0000305" key="4"/>
<proteinExistence type="inferred from homology"/>
<sequence>MSSPSFINKLALPNLATITQYPALTVGLSVFTFLLLVIDLCSNQALSQKFSLYPNAPFEFDLNRLSFYLLFHRGFTHWLLNVVGLFSPLAIFERTNGTVFTGVTLNVLAVTAGLQFCIVGKLLYPNTQVIGLSGVVFSFMSFMAYKEHHTTPVIYTFKYQGSEVSIPTLYSPFIFLIVCMVLIPGSSFWGHLAGISSGYLLALGYIKFLYPPSKAILFIERKLQTPINALRSLVVYYKEEEAIEQRGVSYNPLLSSDPESALNDIPVTTGARTNSFAGEGQVLGAT</sequence>
<protein>
    <recommendedName>
        <fullName evidence="4">Rhomboid-type serine protease 2</fullName>
        <ecNumber evidence="2">3.4.21.105</ecNumber>
    </recommendedName>
    <alternativeName>
        <fullName evidence="4">Rhomboid protein 2</fullName>
    </alternativeName>
</protein>
<accession>Q6BSA9</accession>
<comment type="function">
    <text evidence="2">Probable rhomboid-type serine protease that catalyzes intramembrane proteolysis.</text>
</comment>
<comment type="catalytic activity">
    <reaction evidence="2">
        <text>Cleaves type-1 transmembrane domains using a catalytic dyad composed of serine and histidine that are contributed by different transmembrane domains.</text>
        <dbReference type="EC" id="3.4.21.105"/>
    </reaction>
</comment>
<comment type="subcellular location">
    <subcellularLocation>
        <location evidence="1">Golgi apparatus membrane</location>
        <topology evidence="1">Multi-pass membrane protein</topology>
    </subcellularLocation>
    <subcellularLocation>
        <location evidence="1">Golgi apparatus</location>
        <location evidence="1">cis-Golgi network membrane</location>
        <topology evidence="1">Multi-pass membrane protein</topology>
    </subcellularLocation>
</comment>
<comment type="similarity">
    <text evidence="4">Belongs to the peptidase S54 family.</text>
</comment>
<organism>
    <name type="scientific">Debaryomyces hansenii (strain ATCC 36239 / CBS 767 / BCRC 21394 / JCM 1990 / NBRC 0083 / IGC 2968)</name>
    <name type="common">Yeast</name>
    <name type="synonym">Torulaspora hansenii</name>
    <dbReference type="NCBI Taxonomy" id="284592"/>
    <lineage>
        <taxon>Eukaryota</taxon>
        <taxon>Fungi</taxon>
        <taxon>Dikarya</taxon>
        <taxon>Ascomycota</taxon>
        <taxon>Saccharomycotina</taxon>
        <taxon>Pichiomycetes</taxon>
        <taxon>Debaryomycetaceae</taxon>
        <taxon>Debaryomyces</taxon>
    </lineage>
</organism>
<reference key="1">
    <citation type="journal article" date="2004" name="Nature">
        <title>Genome evolution in yeasts.</title>
        <authorList>
            <person name="Dujon B."/>
            <person name="Sherman D."/>
            <person name="Fischer G."/>
            <person name="Durrens P."/>
            <person name="Casaregola S."/>
            <person name="Lafontaine I."/>
            <person name="de Montigny J."/>
            <person name="Marck C."/>
            <person name="Neuveglise C."/>
            <person name="Talla E."/>
            <person name="Goffard N."/>
            <person name="Frangeul L."/>
            <person name="Aigle M."/>
            <person name="Anthouard V."/>
            <person name="Babour A."/>
            <person name="Barbe V."/>
            <person name="Barnay S."/>
            <person name="Blanchin S."/>
            <person name="Beckerich J.-M."/>
            <person name="Beyne E."/>
            <person name="Bleykasten C."/>
            <person name="Boisrame A."/>
            <person name="Boyer J."/>
            <person name="Cattolico L."/>
            <person name="Confanioleri F."/>
            <person name="de Daruvar A."/>
            <person name="Despons L."/>
            <person name="Fabre E."/>
            <person name="Fairhead C."/>
            <person name="Ferry-Dumazet H."/>
            <person name="Groppi A."/>
            <person name="Hantraye F."/>
            <person name="Hennequin C."/>
            <person name="Jauniaux N."/>
            <person name="Joyet P."/>
            <person name="Kachouri R."/>
            <person name="Kerrest A."/>
            <person name="Koszul R."/>
            <person name="Lemaire M."/>
            <person name="Lesur I."/>
            <person name="Ma L."/>
            <person name="Muller H."/>
            <person name="Nicaud J.-M."/>
            <person name="Nikolski M."/>
            <person name="Oztas S."/>
            <person name="Ozier-Kalogeropoulos O."/>
            <person name="Pellenz S."/>
            <person name="Potier S."/>
            <person name="Richard G.-F."/>
            <person name="Straub M.-L."/>
            <person name="Suleau A."/>
            <person name="Swennen D."/>
            <person name="Tekaia F."/>
            <person name="Wesolowski-Louvel M."/>
            <person name="Westhof E."/>
            <person name="Wirth B."/>
            <person name="Zeniou-Meyer M."/>
            <person name="Zivanovic Y."/>
            <person name="Bolotin-Fukuhara M."/>
            <person name="Thierry A."/>
            <person name="Bouchier C."/>
            <person name="Caudron B."/>
            <person name="Scarpelli C."/>
            <person name="Gaillardin C."/>
            <person name="Weissenbach J."/>
            <person name="Wincker P."/>
            <person name="Souciet J.-L."/>
        </authorList>
    </citation>
    <scope>NUCLEOTIDE SEQUENCE [LARGE SCALE GENOMIC DNA]</scope>
    <source>
        <strain>ATCC 36239 / CBS 767 / BCRC 21394 / JCM 1990 / NBRC 0083 / IGC 2968</strain>
    </source>
</reference>
<feature type="chain" id="PRO_0000206186" description="Rhomboid-type serine protease 2">
    <location>
        <begin position="1"/>
        <end position="286"/>
    </location>
</feature>
<feature type="transmembrane region" description="Helical" evidence="3">
    <location>
        <begin position="18"/>
        <end position="38"/>
    </location>
</feature>
<feature type="transmembrane region" description="Helical" evidence="3">
    <location>
        <begin position="66"/>
        <end position="86"/>
    </location>
</feature>
<feature type="transmembrane region" description="Helical" evidence="3">
    <location>
        <begin position="99"/>
        <end position="119"/>
    </location>
</feature>
<feature type="transmembrane region" description="Helical" evidence="3">
    <location>
        <begin position="122"/>
        <end position="142"/>
    </location>
</feature>
<feature type="transmembrane region" description="Helical" evidence="3">
    <location>
        <begin position="164"/>
        <end position="183"/>
    </location>
</feature>
<feature type="transmembrane region" description="Helical" evidence="3">
    <location>
        <begin position="188"/>
        <end position="210"/>
    </location>
</feature>
<feature type="active site" description="Nucleophile" evidence="2">
    <location>
        <position position="133"/>
    </location>
</feature>
<feature type="active site" evidence="2">
    <location>
        <position position="191"/>
    </location>
</feature>
<keyword id="KW-0333">Golgi apparatus</keyword>
<keyword id="KW-0378">Hydrolase</keyword>
<keyword id="KW-0472">Membrane</keyword>
<keyword id="KW-0645">Protease</keyword>
<keyword id="KW-1185">Reference proteome</keyword>
<keyword id="KW-0720">Serine protease</keyword>
<keyword id="KW-0812">Transmembrane</keyword>
<keyword id="KW-1133">Transmembrane helix</keyword>
<gene>
    <name type="primary">RBD2</name>
    <name type="ordered locus">DEHA2D10252g</name>
</gene>